<reference key="1">
    <citation type="submission" date="2008-03" db="EMBL/GenBank/DDBJ databases">
        <title>Complete sequence of Thermoproteus neutrophilus V24Sta.</title>
        <authorList>
            <consortium name="US DOE Joint Genome Institute"/>
            <person name="Copeland A."/>
            <person name="Lucas S."/>
            <person name="Lapidus A."/>
            <person name="Glavina del Rio T."/>
            <person name="Dalin E."/>
            <person name="Tice H."/>
            <person name="Bruce D."/>
            <person name="Goodwin L."/>
            <person name="Pitluck S."/>
            <person name="Sims D."/>
            <person name="Brettin T."/>
            <person name="Detter J.C."/>
            <person name="Han C."/>
            <person name="Kuske C.R."/>
            <person name="Schmutz J."/>
            <person name="Larimer F."/>
            <person name="Land M."/>
            <person name="Hauser L."/>
            <person name="Kyrpides N."/>
            <person name="Mikhailova N."/>
            <person name="Biddle J.F."/>
            <person name="Zhang Z."/>
            <person name="Fitz-Gibbon S.T."/>
            <person name="Lowe T.M."/>
            <person name="Saltikov C."/>
            <person name="House C.H."/>
            <person name="Richardson P."/>
        </authorList>
    </citation>
    <scope>NUCLEOTIDE SEQUENCE [LARGE SCALE GENOMIC DNA]</scope>
    <source>
        <strain>DSM 2338 / JCM 9278 / NBRC 100436 / V24Sta</strain>
    </source>
</reference>
<comment type="function">
    <text evidence="1">Dimethylates a single guanine residue at position 26 of a number of tRNAs using S-adenosyl-L-methionine as donor of the methyl groups.</text>
</comment>
<comment type="catalytic activity">
    <reaction evidence="1">
        <text>guanosine(26) in tRNA + 2 S-adenosyl-L-methionine = N(2)-dimethylguanosine(26) in tRNA + 2 S-adenosyl-L-homocysteine + 2 H(+)</text>
        <dbReference type="Rhea" id="RHEA:43140"/>
        <dbReference type="Rhea" id="RHEA-COMP:10359"/>
        <dbReference type="Rhea" id="RHEA-COMP:10360"/>
        <dbReference type="ChEBI" id="CHEBI:15378"/>
        <dbReference type="ChEBI" id="CHEBI:57856"/>
        <dbReference type="ChEBI" id="CHEBI:59789"/>
        <dbReference type="ChEBI" id="CHEBI:74269"/>
        <dbReference type="ChEBI" id="CHEBI:74513"/>
        <dbReference type="EC" id="2.1.1.216"/>
    </reaction>
</comment>
<comment type="similarity">
    <text evidence="1">Belongs to the class I-like SAM-binding methyltransferase superfamily. Trm1 family.</text>
</comment>
<feature type="chain" id="PRO_1000114983" description="tRNA (guanine(26)-N(2))-dimethyltransferase">
    <location>
        <begin position="1"/>
        <end position="351"/>
    </location>
</feature>
<feature type="domain" description="Trm1 methyltransferase" evidence="1">
    <location>
        <begin position="4"/>
        <end position="350"/>
    </location>
</feature>
<feature type="binding site" evidence="1">
    <location>
        <position position="39"/>
    </location>
    <ligand>
        <name>S-adenosyl-L-methionine</name>
        <dbReference type="ChEBI" id="CHEBI:59789"/>
    </ligand>
</feature>
<feature type="binding site" evidence="1">
    <location>
        <position position="65"/>
    </location>
    <ligand>
        <name>S-adenosyl-L-methionine</name>
        <dbReference type="ChEBI" id="CHEBI:59789"/>
    </ligand>
</feature>
<feature type="binding site" evidence="1">
    <location>
        <position position="83"/>
    </location>
    <ligand>
        <name>S-adenosyl-L-methionine</name>
        <dbReference type="ChEBI" id="CHEBI:59789"/>
    </ligand>
</feature>
<feature type="binding site" evidence="1">
    <location>
        <position position="109"/>
    </location>
    <ligand>
        <name>S-adenosyl-L-methionine</name>
        <dbReference type="ChEBI" id="CHEBI:59789"/>
    </ligand>
</feature>
<feature type="binding site" evidence="1">
    <location>
        <position position="110"/>
    </location>
    <ligand>
        <name>S-adenosyl-L-methionine</name>
        <dbReference type="ChEBI" id="CHEBI:59789"/>
    </ligand>
</feature>
<protein>
    <recommendedName>
        <fullName evidence="1">tRNA (guanine(26)-N(2))-dimethyltransferase</fullName>
        <ecNumber evidence="1">2.1.1.216</ecNumber>
    </recommendedName>
    <alternativeName>
        <fullName evidence="1">tRNA 2,2-dimethylguanosine-26 methyltransferase</fullName>
    </alternativeName>
    <alternativeName>
        <fullName evidence="1">tRNA(guanine-26,N(2)-N(2)) methyltransferase</fullName>
    </alternativeName>
    <alternativeName>
        <fullName evidence="1">tRNA(m(2,2)G26)dimethyltransferase</fullName>
    </alternativeName>
</protein>
<dbReference type="EC" id="2.1.1.216" evidence="1"/>
<dbReference type="EMBL" id="CP001014">
    <property type="protein sequence ID" value="ACB39622.1"/>
    <property type="molecule type" value="Genomic_DNA"/>
</dbReference>
<dbReference type="RefSeq" id="WP_012350042.1">
    <property type="nucleotide sequence ID" value="NC_010525.1"/>
</dbReference>
<dbReference type="SMR" id="B1YCV9"/>
<dbReference type="STRING" id="444157.Tneu_0683"/>
<dbReference type="GeneID" id="6165286"/>
<dbReference type="KEGG" id="tne:Tneu_0683"/>
<dbReference type="eggNOG" id="arCOG01219">
    <property type="taxonomic scope" value="Archaea"/>
</dbReference>
<dbReference type="HOGENOM" id="CLU_010862_5_1_2"/>
<dbReference type="OrthoDB" id="372177at2157"/>
<dbReference type="Proteomes" id="UP000001694">
    <property type="component" value="Chromosome"/>
</dbReference>
<dbReference type="GO" id="GO:0160104">
    <property type="term" value="F:tRNA (guanine(26)-N2)-dimethyltransferase activity"/>
    <property type="evidence" value="ECO:0007669"/>
    <property type="project" value="UniProtKB-UniRule"/>
</dbReference>
<dbReference type="GO" id="GO:0000049">
    <property type="term" value="F:tRNA binding"/>
    <property type="evidence" value="ECO:0007669"/>
    <property type="project" value="UniProtKB-KW"/>
</dbReference>
<dbReference type="GO" id="GO:0002940">
    <property type="term" value="P:tRNA N2-guanine methylation"/>
    <property type="evidence" value="ECO:0007669"/>
    <property type="project" value="TreeGrafter"/>
</dbReference>
<dbReference type="CDD" id="cd02440">
    <property type="entry name" value="AdoMet_MTases"/>
    <property type="match status" value="1"/>
</dbReference>
<dbReference type="Gene3D" id="3.40.50.150">
    <property type="entry name" value="Vaccinia Virus protein VP39"/>
    <property type="match status" value="1"/>
</dbReference>
<dbReference type="HAMAP" id="MF_00290">
    <property type="entry name" value="tRNA_dimethyltr_TRM1"/>
    <property type="match status" value="1"/>
</dbReference>
<dbReference type="InterPro" id="IPR029063">
    <property type="entry name" value="SAM-dependent_MTases_sf"/>
</dbReference>
<dbReference type="InterPro" id="IPR002905">
    <property type="entry name" value="Trm1"/>
</dbReference>
<dbReference type="InterPro" id="IPR022923">
    <property type="entry name" value="TRM1_arc_bac"/>
</dbReference>
<dbReference type="PANTHER" id="PTHR10631">
    <property type="entry name" value="N 2 ,N 2 -DIMETHYLGUANOSINE TRNA METHYLTRANSFERASE"/>
    <property type="match status" value="1"/>
</dbReference>
<dbReference type="PANTHER" id="PTHR10631:SF3">
    <property type="entry name" value="TRNA (GUANINE(26)-N(2))-DIMETHYLTRANSFERASE"/>
    <property type="match status" value="1"/>
</dbReference>
<dbReference type="Pfam" id="PF02005">
    <property type="entry name" value="TRM"/>
    <property type="match status" value="1"/>
</dbReference>
<dbReference type="SUPFAM" id="SSF53335">
    <property type="entry name" value="S-adenosyl-L-methionine-dependent methyltransferases"/>
    <property type="match status" value="1"/>
</dbReference>
<dbReference type="PROSITE" id="PS51626">
    <property type="entry name" value="SAM_MT_TRM1"/>
    <property type="match status" value="1"/>
</dbReference>
<sequence>MNLVLRREGAVQFYAPDPQRYGSIYSAPVFYNPAMEKNRTLSVLLLRTLGGGLTVCEPLSGTGVRGIRYAVESKAVARLVLNDISRDAAELIKKNLELNGVDGEVYNDDANVLLHRLKNVCDVVDIDPFGSPAPYIHAAFRALRDEGLLCATATDTAVLVGRYPRKCLRRYWSTVRKTPFYIELGLRNLVGFIARVAASEDFSIRPLMSYWEGHYFRTCVAVARGARDADDALQNVGYVVYRRGMRQTTQLPDESSSGPLWLGPLGDPLIMHQMAQHGVYSDFLGVLEQEYSIEAPWHYRLPEFAVEGVSPTLAEALDLLRRSGIYATATHMAKDGFKADAGYGEVKRALF</sequence>
<gene>
    <name evidence="1" type="primary">trm1</name>
    <name type="ordered locus">Tneu_0683</name>
</gene>
<name>TRM1_PYRNV</name>
<proteinExistence type="inferred from homology"/>
<evidence type="ECO:0000255" key="1">
    <source>
        <dbReference type="HAMAP-Rule" id="MF_00290"/>
    </source>
</evidence>
<organism>
    <name type="scientific">Pyrobaculum neutrophilum (strain DSM 2338 / JCM 9278 / NBRC 100436 / V24Sta)</name>
    <name type="common">Thermoproteus neutrophilus</name>
    <dbReference type="NCBI Taxonomy" id="444157"/>
    <lineage>
        <taxon>Archaea</taxon>
        <taxon>Thermoproteota</taxon>
        <taxon>Thermoprotei</taxon>
        <taxon>Thermoproteales</taxon>
        <taxon>Thermoproteaceae</taxon>
        <taxon>Pyrobaculum</taxon>
    </lineage>
</organism>
<keyword id="KW-0489">Methyltransferase</keyword>
<keyword id="KW-0694">RNA-binding</keyword>
<keyword id="KW-0949">S-adenosyl-L-methionine</keyword>
<keyword id="KW-0808">Transferase</keyword>
<keyword id="KW-0819">tRNA processing</keyword>
<keyword id="KW-0820">tRNA-binding</keyword>
<accession>B1YCV9</accession>